<accession>A5GF89</accession>
<sequence>MDGFIVVDKSAGMTSHDVVSAVRRIAGQKKVGHTGTLDPFATGVLPVALGEATKAIPFLDESIKEYRAVMKLGVATDTQDYTGKVLHESDWSHVTTSALNEICRMFVGKLSQVPPMFSALKQNGVPLYKLARQGAEVPRQPREIEIYSLVIEAVNLPEVAFTVRCSRGTYVRTLANDIGGKLGCGAHLLQLHRSLSGPFSINNAITLDDWARRMQDGRAGETLVSPFAALSHLKDFILTGKGAAKVANGVVPALEDFQVLSECELLRDELVRMSFGGTLLAVAKAGLPGDWKMLKNLKLSRVFNLDNSFT</sequence>
<keyword id="KW-0413">Isomerase</keyword>
<keyword id="KW-1185">Reference proteome</keyword>
<keyword id="KW-0819">tRNA processing</keyword>
<name>TRUB_GEOUR</name>
<reference key="1">
    <citation type="submission" date="2007-05" db="EMBL/GenBank/DDBJ databases">
        <title>Complete sequence of Geobacter uraniireducens Rf4.</title>
        <authorList>
            <consortium name="US DOE Joint Genome Institute"/>
            <person name="Copeland A."/>
            <person name="Lucas S."/>
            <person name="Lapidus A."/>
            <person name="Barry K."/>
            <person name="Detter J.C."/>
            <person name="Glavina del Rio T."/>
            <person name="Hammon N."/>
            <person name="Israni S."/>
            <person name="Dalin E."/>
            <person name="Tice H."/>
            <person name="Pitluck S."/>
            <person name="Chertkov O."/>
            <person name="Brettin T."/>
            <person name="Bruce D."/>
            <person name="Han C."/>
            <person name="Schmutz J."/>
            <person name="Larimer F."/>
            <person name="Land M."/>
            <person name="Hauser L."/>
            <person name="Kyrpides N."/>
            <person name="Mikhailova N."/>
            <person name="Shelobolina E."/>
            <person name="Aklujkar M."/>
            <person name="Lovley D."/>
            <person name="Richardson P."/>
        </authorList>
    </citation>
    <scope>NUCLEOTIDE SEQUENCE [LARGE SCALE GENOMIC DNA]</scope>
    <source>
        <strain>ATCC BAA-1134 / JCM 13001 / Rf4</strain>
    </source>
</reference>
<protein>
    <recommendedName>
        <fullName evidence="1">tRNA pseudouridine synthase B</fullName>
        <ecNumber evidence="1">5.4.99.25</ecNumber>
    </recommendedName>
    <alternativeName>
        <fullName evidence="1">tRNA pseudouridine(55) synthase</fullName>
        <shortName evidence="1">Psi55 synthase</shortName>
    </alternativeName>
    <alternativeName>
        <fullName evidence="1">tRNA pseudouridylate synthase</fullName>
    </alternativeName>
    <alternativeName>
        <fullName evidence="1">tRNA-uridine isomerase</fullName>
    </alternativeName>
</protein>
<comment type="function">
    <text evidence="1">Responsible for synthesis of pseudouridine from uracil-55 in the psi GC loop of transfer RNAs.</text>
</comment>
<comment type="catalytic activity">
    <reaction evidence="1">
        <text>uridine(55) in tRNA = pseudouridine(55) in tRNA</text>
        <dbReference type="Rhea" id="RHEA:42532"/>
        <dbReference type="Rhea" id="RHEA-COMP:10101"/>
        <dbReference type="Rhea" id="RHEA-COMP:10102"/>
        <dbReference type="ChEBI" id="CHEBI:65314"/>
        <dbReference type="ChEBI" id="CHEBI:65315"/>
        <dbReference type="EC" id="5.4.99.25"/>
    </reaction>
</comment>
<comment type="similarity">
    <text evidence="1">Belongs to the pseudouridine synthase TruB family. Type 1 subfamily.</text>
</comment>
<organism>
    <name type="scientific">Geotalea uraniireducens (strain Rf4)</name>
    <name type="common">Geobacter uraniireducens</name>
    <dbReference type="NCBI Taxonomy" id="351605"/>
    <lineage>
        <taxon>Bacteria</taxon>
        <taxon>Pseudomonadati</taxon>
        <taxon>Thermodesulfobacteriota</taxon>
        <taxon>Desulfuromonadia</taxon>
        <taxon>Geobacterales</taxon>
        <taxon>Geobacteraceae</taxon>
        <taxon>Geotalea</taxon>
    </lineage>
</organism>
<proteinExistence type="inferred from homology"/>
<gene>
    <name evidence="1" type="primary">truB</name>
    <name type="ordered locus">Gura_1904</name>
</gene>
<dbReference type="EC" id="5.4.99.25" evidence="1"/>
<dbReference type="EMBL" id="CP000698">
    <property type="protein sequence ID" value="ABQ26094.1"/>
    <property type="molecule type" value="Genomic_DNA"/>
</dbReference>
<dbReference type="RefSeq" id="WP_011938797.1">
    <property type="nucleotide sequence ID" value="NC_009483.1"/>
</dbReference>
<dbReference type="SMR" id="A5GF89"/>
<dbReference type="STRING" id="351605.Gura_1904"/>
<dbReference type="KEGG" id="gur:Gura_1904"/>
<dbReference type="HOGENOM" id="CLU_032087_0_0_7"/>
<dbReference type="OrthoDB" id="9802309at2"/>
<dbReference type="Proteomes" id="UP000006695">
    <property type="component" value="Chromosome"/>
</dbReference>
<dbReference type="GO" id="GO:0003723">
    <property type="term" value="F:RNA binding"/>
    <property type="evidence" value="ECO:0007669"/>
    <property type="project" value="InterPro"/>
</dbReference>
<dbReference type="GO" id="GO:0160148">
    <property type="term" value="F:tRNA pseudouridine(55) synthase activity"/>
    <property type="evidence" value="ECO:0007669"/>
    <property type="project" value="UniProtKB-EC"/>
</dbReference>
<dbReference type="GO" id="GO:0031119">
    <property type="term" value="P:tRNA pseudouridine synthesis"/>
    <property type="evidence" value="ECO:0007669"/>
    <property type="project" value="UniProtKB-UniRule"/>
</dbReference>
<dbReference type="CDD" id="cd02573">
    <property type="entry name" value="PseudoU_synth_EcTruB"/>
    <property type="match status" value="1"/>
</dbReference>
<dbReference type="Gene3D" id="3.30.2350.10">
    <property type="entry name" value="Pseudouridine synthase"/>
    <property type="match status" value="1"/>
</dbReference>
<dbReference type="HAMAP" id="MF_01080">
    <property type="entry name" value="TruB_bact"/>
    <property type="match status" value="1"/>
</dbReference>
<dbReference type="InterPro" id="IPR020103">
    <property type="entry name" value="PsdUridine_synth_cat_dom_sf"/>
</dbReference>
<dbReference type="InterPro" id="IPR002501">
    <property type="entry name" value="PsdUridine_synth_N"/>
</dbReference>
<dbReference type="InterPro" id="IPR014780">
    <property type="entry name" value="tRNA_psdUridine_synth_TruB"/>
</dbReference>
<dbReference type="InterPro" id="IPR032819">
    <property type="entry name" value="TruB_C"/>
</dbReference>
<dbReference type="NCBIfam" id="TIGR00431">
    <property type="entry name" value="TruB"/>
    <property type="match status" value="1"/>
</dbReference>
<dbReference type="Pfam" id="PF16198">
    <property type="entry name" value="TruB_C_2"/>
    <property type="match status" value="1"/>
</dbReference>
<dbReference type="Pfam" id="PF01509">
    <property type="entry name" value="TruB_N"/>
    <property type="match status" value="1"/>
</dbReference>
<dbReference type="SUPFAM" id="SSF55120">
    <property type="entry name" value="Pseudouridine synthase"/>
    <property type="match status" value="1"/>
</dbReference>
<evidence type="ECO:0000255" key="1">
    <source>
        <dbReference type="HAMAP-Rule" id="MF_01080"/>
    </source>
</evidence>
<feature type="chain" id="PRO_1000084600" description="tRNA pseudouridine synthase B">
    <location>
        <begin position="1"/>
        <end position="310"/>
    </location>
</feature>
<feature type="active site" description="Nucleophile" evidence="1">
    <location>
        <position position="38"/>
    </location>
</feature>